<reference key="1">
    <citation type="journal article" date="1992" name="Exp. Parasitol.">
        <title>Molecular characterization of cDNA sequences encoding glutathione S-transferases of Fasciola hepatica.</title>
        <authorList>
            <person name="Panaccio M."/>
            <person name="Wilson L.R."/>
            <person name="Crameri S.L."/>
            <person name="Wijffels G.L."/>
            <person name="Spithill T.W."/>
        </authorList>
    </citation>
    <scope>NUCLEOTIDE SEQUENCE [MRNA]</scope>
</reference>
<reference key="2">
    <citation type="journal article" date="1993" name="Exp. Parasitol.">
        <authorList>
            <person name="Panaccio M."/>
            <person name="Wilson L.R."/>
            <person name="Crameri S.L."/>
            <person name="Wijffels G.L."/>
            <person name="Spithill T.W."/>
        </authorList>
    </citation>
    <scope>ERRATUM OF PUBMED:1740183</scope>
</reference>
<reference key="3">
    <citation type="patent" date="1990-08-09" number="WO9008819">
        <authorList>
            <person name="Crameri S."/>
        </authorList>
    </citation>
    <scope>NUCLEOTIDE SEQUENCE OF 23-221</scope>
</reference>
<reference key="4">
    <citation type="journal article" date="1997" name="J. Mol. Biol.">
        <title>Crystallization, structural determination and analysis of a novel parasite vaccine candidate: Fasciola hepatica glutathione S-transferase.</title>
        <authorList>
            <person name="Rossjohn J."/>
            <person name="Feil S.C."/>
            <person name="Wilce M.C.J."/>
            <person name="Sexton J.L."/>
            <person name="Spithill T.W."/>
            <person name="Parker M.W."/>
        </authorList>
    </citation>
    <scope>X-RAY CRYSTALLOGRAPHY (2.3 ANGSTROMS) IN COMPLEX WITH GLUTATHIONE</scope>
    <scope>SUBUNIT</scope>
</reference>
<comment type="function">
    <text>Conjugation of reduced glutathione to a wide number of exogenous and endogenous hydrophobic electrophiles.</text>
</comment>
<comment type="function">
    <text>GST isoenzymes appear to play a central role in the parasite detoxification system. Other functions are also suspected including a role in increasing the solubility of haematin in the parasite gut.</text>
</comment>
<comment type="catalytic activity">
    <reaction>
        <text>RX + glutathione = an S-substituted glutathione + a halide anion + H(+)</text>
        <dbReference type="Rhea" id="RHEA:16437"/>
        <dbReference type="ChEBI" id="CHEBI:15378"/>
        <dbReference type="ChEBI" id="CHEBI:16042"/>
        <dbReference type="ChEBI" id="CHEBI:17792"/>
        <dbReference type="ChEBI" id="CHEBI:57925"/>
        <dbReference type="ChEBI" id="CHEBI:90779"/>
        <dbReference type="EC" id="2.5.1.18"/>
    </reaction>
</comment>
<comment type="subunit">
    <text evidence="2">Homodimer.</text>
</comment>
<comment type="similarity">
    <text evidence="3">Belongs to the GST superfamily. Mu family.</text>
</comment>
<accession>P56598</accession>
<sequence>MPAKLGYWKIRGLQQPVRLLLEYGEKYEEQIYERDDGEKWFSKKFELGLDLPNLPYYIDDKCKLTQSLAILRYIADKHGMIGSTPEERARVSMIEGAAVDLRQGLSRISYDPKFEQLKEGYLKDLPTTMKMWSDFLGKNPYLRGTSVSHVDFMVYEALDAIRYLEPHCLDHFPNLQQFMSRIEALPSIKAYMESNRFIKWPLNGWHAQFGGGDAPPSHEKK</sequence>
<protein>
    <recommendedName>
        <fullName>Glutathione S-transferase class-mu 26 kDa isozyme 1</fullName>
        <shortName>GST1</shortName>
        <ecNumber>2.5.1.18</ecNumber>
    </recommendedName>
    <alternativeName>
        <fullName>Fh1</fullName>
    </alternativeName>
</protein>
<feature type="initiator methionine" description="Removed" evidence="1">
    <location>
        <position position="1"/>
    </location>
</feature>
<feature type="chain" id="PRO_0000185810" description="Glutathione S-transferase class-mu 26 kDa isozyme 1">
    <location>
        <begin position="2"/>
        <end position="221"/>
    </location>
</feature>
<feature type="domain" description="GST N-terminal">
    <location>
        <begin position="2"/>
        <end position="82"/>
    </location>
</feature>
<feature type="domain" description="GST C-terminal">
    <location>
        <begin position="84"/>
        <end position="202"/>
    </location>
</feature>
<feature type="binding site" evidence="2 4">
    <location>
        <begin position="7"/>
        <end position="8"/>
    </location>
    <ligand>
        <name>glutathione</name>
        <dbReference type="ChEBI" id="CHEBI:57925"/>
    </ligand>
</feature>
<feature type="binding site" evidence="2 4">
    <location>
        <begin position="40"/>
        <end position="44"/>
    </location>
    <ligand>
        <name>glutathione</name>
        <dbReference type="ChEBI" id="CHEBI:57925"/>
    </ligand>
</feature>
<feature type="binding site" evidence="2 4">
    <location>
        <begin position="53"/>
        <end position="54"/>
    </location>
    <ligand>
        <name>glutathione</name>
        <dbReference type="ChEBI" id="CHEBI:57925"/>
    </ligand>
</feature>
<feature type="binding site" evidence="2 4">
    <location>
        <begin position="66"/>
        <end position="67"/>
    </location>
    <ligand>
        <name>glutathione</name>
        <dbReference type="ChEBI" id="CHEBI:57925"/>
    </ligand>
</feature>
<feature type="binding site" evidence="1">
    <location>
        <position position="110"/>
    </location>
    <ligand>
        <name>substrate</name>
    </ligand>
</feature>
<feature type="sequence conflict" description="In Ref. 3; CAA00118." evidence="3" ref="3">
    <original>Y</original>
    <variation>V</variation>
    <location>
        <position position="23"/>
    </location>
</feature>
<feature type="sequence conflict" description="In Ref. 3; CAA00118." evidence="3" ref="3">
    <original>DP</original>
    <variation>VS</variation>
    <location>
        <begin position="111"/>
        <end position="112"/>
    </location>
</feature>
<feature type="sequence conflict" description="In Ref. 3; CAA00118." evidence="3" ref="3">
    <original>A</original>
    <variation>P</variation>
    <location>
        <position position="190"/>
    </location>
</feature>
<feature type="strand" evidence="5">
    <location>
        <begin position="3"/>
        <end position="11"/>
    </location>
</feature>
<feature type="turn" evidence="5">
    <location>
        <begin position="12"/>
        <end position="14"/>
    </location>
</feature>
<feature type="helix" evidence="5">
    <location>
        <begin position="15"/>
        <end position="23"/>
    </location>
</feature>
<feature type="strand" evidence="5">
    <location>
        <begin position="27"/>
        <end position="32"/>
    </location>
</feature>
<feature type="helix" evidence="5">
    <location>
        <begin position="37"/>
        <end position="43"/>
    </location>
</feature>
<feature type="turn" evidence="5">
    <location>
        <begin position="44"/>
        <end position="46"/>
    </location>
</feature>
<feature type="strand" evidence="5">
    <location>
        <begin position="54"/>
        <end position="58"/>
    </location>
</feature>
<feature type="strand" evidence="5">
    <location>
        <begin position="63"/>
        <end position="66"/>
    </location>
</feature>
<feature type="helix" evidence="5">
    <location>
        <begin position="67"/>
        <end position="77"/>
    </location>
</feature>
<feature type="helix" evidence="5">
    <location>
        <begin position="85"/>
        <end position="109"/>
    </location>
</feature>
<feature type="helix" evidence="5">
    <location>
        <begin position="114"/>
        <end position="136"/>
    </location>
</feature>
<feature type="strand" evidence="5">
    <location>
        <begin position="144"/>
        <end position="146"/>
    </location>
</feature>
<feature type="helix" evidence="5">
    <location>
        <begin position="149"/>
        <end position="164"/>
    </location>
</feature>
<feature type="turn" evidence="5">
    <location>
        <begin position="166"/>
        <end position="171"/>
    </location>
</feature>
<feature type="helix" evidence="5">
    <location>
        <begin position="173"/>
        <end position="183"/>
    </location>
</feature>
<feature type="helix" evidence="5">
    <location>
        <begin position="186"/>
        <end position="192"/>
    </location>
</feature>
<feature type="strand" evidence="5">
    <location>
        <begin position="194"/>
        <end position="196"/>
    </location>
</feature>
<feature type="strand" evidence="5">
    <location>
        <begin position="208"/>
        <end position="210"/>
    </location>
</feature>
<feature type="strand" evidence="5">
    <location>
        <begin position="212"/>
        <end position="214"/>
    </location>
</feature>
<keyword id="KW-0002">3D-structure</keyword>
<keyword id="KW-0808">Transferase</keyword>
<name>GST29_FASHE</name>
<evidence type="ECO:0000250" key="1"/>
<evidence type="ECO:0000269" key="2">
    <source>
    </source>
</evidence>
<evidence type="ECO:0000305" key="3"/>
<evidence type="ECO:0007744" key="4">
    <source>
        <dbReference type="PDB" id="2FHE"/>
    </source>
</evidence>
<evidence type="ECO:0007829" key="5">
    <source>
        <dbReference type="PDB" id="2FHE"/>
    </source>
</evidence>
<proteinExistence type="evidence at protein level"/>
<dbReference type="EC" id="2.5.1.18"/>
<dbReference type="EMBL" id="A00993">
    <property type="protein sequence ID" value="CAA00118.1"/>
    <property type="molecule type" value="Unassigned_RNA"/>
</dbReference>
<dbReference type="PDB" id="2FHE">
    <property type="method" value="X-ray"/>
    <property type="resolution" value="2.30 A"/>
    <property type="chains" value="A/B=2-216"/>
</dbReference>
<dbReference type="PDBsum" id="2FHE"/>
<dbReference type="SMR" id="P56598"/>
<dbReference type="BRENDA" id="2.5.1.18">
    <property type="organism ID" value="2230"/>
</dbReference>
<dbReference type="EvolutionaryTrace" id="P56598"/>
<dbReference type="GO" id="GO:0004364">
    <property type="term" value="F:glutathione transferase activity"/>
    <property type="evidence" value="ECO:0007669"/>
    <property type="project" value="UniProtKB-EC"/>
</dbReference>
<dbReference type="GO" id="GO:0042802">
    <property type="term" value="F:identical protein binding"/>
    <property type="evidence" value="ECO:0007669"/>
    <property type="project" value="UniProtKB-ARBA"/>
</dbReference>
<dbReference type="GO" id="GO:0006749">
    <property type="term" value="P:glutathione metabolic process"/>
    <property type="evidence" value="ECO:0007669"/>
    <property type="project" value="TreeGrafter"/>
</dbReference>
<dbReference type="CDD" id="cd03209">
    <property type="entry name" value="GST_C_Mu"/>
    <property type="match status" value="1"/>
</dbReference>
<dbReference type="CDD" id="cd03075">
    <property type="entry name" value="GST_N_Mu"/>
    <property type="match status" value="1"/>
</dbReference>
<dbReference type="FunFam" id="1.20.1050.10:FF:000003">
    <property type="entry name" value="Glutathione S-transferase 2"/>
    <property type="match status" value="1"/>
</dbReference>
<dbReference type="Gene3D" id="1.20.1050.130">
    <property type="match status" value="1"/>
</dbReference>
<dbReference type="InterPro" id="IPR010987">
    <property type="entry name" value="Glutathione-S-Trfase_C-like"/>
</dbReference>
<dbReference type="InterPro" id="IPR036282">
    <property type="entry name" value="Glutathione-S-Trfase_C_sf"/>
</dbReference>
<dbReference type="InterPro" id="IPR040079">
    <property type="entry name" value="Glutathione_S-Trfase"/>
</dbReference>
<dbReference type="InterPro" id="IPR004045">
    <property type="entry name" value="Glutathione_S-Trfase_N"/>
</dbReference>
<dbReference type="InterPro" id="IPR004046">
    <property type="entry name" value="GST_C"/>
</dbReference>
<dbReference type="InterPro" id="IPR003081">
    <property type="entry name" value="GST_mu"/>
</dbReference>
<dbReference type="InterPro" id="IPR050213">
    <property type="entry name" value="GST_superfamily"/>
</dbReference>
<dbReference type="InterPro" id="IPR036249">
    <property type="entry name" value="Thioredoxin-like_sf"/>
</dbReference>
<dbReference type="PANTHER" id="PTHR11571">
    <property type="entry name" value="GLUTATHIONE S-TRANSFERASE"/>
    <property type="match status" value="1"/>
</dbReference>
<dbReference type="PANTHER" id="PTHR11571:SF222">
    <property type="entry name" value="GLUTATHIONE TRANSFERASE"/>
    <property type="match status" value="1"/>
</dbReference>
<dbReference type="Pfam" id="PF14497">
    <property type="entry name" value="GST_C_3"/>
    <property type="match status" value="1"/>
</dbReference>
<dbReference type="Pfam" id="PF02798">
    <property type="entry name" value="GST_N"/>
    <property type="match status" value="1"/>
</dbReference>
<dbReference type="PRINTS" id="PR01267">
    <property type="entry name" value="GSTRNSFRASEM"/>
</dbReference>
<dbReference type="SFLD" id="SFLDG01205">
    <property type="entry name" value="AMPS.1"/>
    <property type="match status" value="1"/>
</dbReference>
<dbReference type="SFLD" id="SFLDS00019">
    <property type="entry name" value="Glutathione_Transferase_(cytos"/>
    <property type="match status" value="1"/>
</dbReference>
<dbReference type="SUPFAM" id="SSF47616">
    <property type="entry name" value="GST C-terminal domain-like"/>
    <property type="match status" value="1"/>
</dbReference>
<dbReference type="SUPFAM" id="SSF52833">
    <property type="entry name" value="Thioredoxin-like"/>
    <property type="match status" value="1"/>
</dbReference>
<dbReference type="PROSITE" id="PS50405">
    <property type="entry name" value="GST_CTER"/>
    <property type="match status" value="1"/>
</dbReference>
<dbReference type="PROSITE" id="PS50404">
    <property type="entry name" value="GST_NTER"/>
    <property type="match status" value="1"/>
</dbReference>
<organism>
    <name type="scientific">Fasciola hepatica</name>
    <name type="common">Liver fluke</name>
    <dbReference type="NCBI Taxonomy" id="6192"/>
    <lineage>
        <taxon>Eukaryota</taxon>
        <taxon>Metazoa</taxon>
        <taxon>Spiralia</taxon>
        <taxon>Lophotrochozoa</taxon>
        <taxon>Platyhelminthes</taxon>
        <taxon>Trematoda</taxon>
        <taxon>Digenea</taxon>
        <taxon>Plagiorchiida</taxon>
        <taxon>Echinostomata</taxon>
        <taxon>Echinostomatoidea</taxon>
        <taxon>Fasciolidae</taxon>
        <taxon>Fasciola</taxon>
    </lineage>
</organism>